<keyword id="KW-0312">Gluconeogenesis</keyword>
<keyword id="KW-0324">Glycolysis</keyword>
<keyword id="KW-0413">Isomerase</keyword>
<keyword id="KW-1185">Reference proteome</keyword>
<evidence type="ECO:0000255" key="1">
    <source>
        <dbReference type="HAMAP-Rule" id="MF_01039"/>
    </source>
</evidence>
<comment type="function">
    <text evidence="1">Catalyzes the interconversion of 2-phosphoglycerate and 3-phosphoglycerate.</text>
</comment>
<comment type="catalytic activity">
    <reaction evidence="1">
        <text>(2R)-2-phosphoglycerate = (2R)-3-phosphoglycerate</text>
        <dbReference type="Rhea" id="RHEA:15901"/>
        <dbReference type="ChEBI" id="CHEBI:58272"/>
        <dbReference type="ChEBI" id="CHEBI:58289"/>
        <dbReference type="EC" id="5.4.2.11"/>
    </reaction>
</comment>
<comment type="pathway">
    <text evidence="1">Carbohydrate degradation; glycolysis; pyruvate from D-glyceraldehyde 3-phosphate: step 3/5.</text>
</comment>
<comment type="similarity">
    <text evidence="1">Belongs to the phosphoglycerate mutase family. BPG-dependent PGAM subfamily.</text>
</comment>
<dbReference type="EC" id="5.4.2.11" evidence="1"/>
<dbReference type="EMBL" id="CP001338">
    <property type="protein sequence ID" value="ACL16006.1"/>
    <property type="molecule type" value="Genomic_DNA"/>
</dbReference>
<dbReference type="RefSeq" id="WP_012617325.1">
    <property type="nucleotide sequence ID" value="NC_011832.1"/>
</dbReference>
<dbReference type="SMR" id="B8GFF8"/>
<dbReference type="STRING" id="521011.Mpal_0635"/>
<dbReference type="GeneID" id="7270222"/>
<dbReference type="KEGG" id="mpl:Mpal_0635"/>
<dbReference type="eggNOG" id="arCOG01993">
    <property type="taxonomic scope" value="Archaea"/>
</dbReference>
<dbReference type="HOGENOM" id="CLU_033323_1_1_2"/>
<dbReference type="OrthoDB" id="304253at2157"/>
<dbReference type="UniPathway" id="UPA00109">
    <property type="reaction ID" value="UER00186"/>
</dbReference>
<dbReference type="Proteomes" id="UP000002457">
    <property type="component" value="Chromosome"/>
</dbReference>
<dbReference type="GO" id="GO:0004619">
    <property type="term" value="F:phosphoglycerate mutase activity"/>
    <property type="evidence" value="ECO:0007669"/>
    <property type="project" value="UniProtKB-EC"/>
</dbReference>
<dbReference type="GO" id="GO:0006094">
    <property type="term" value="P:gluconeogenesis"/>
    <property type="evidence" value="ECO:0007669"/>
    <property type="project" value="UniProtKB-UniRule"/>
</dbReference>
<dbReference type="GO" id="GO:0006096">
    <property type="term" value="P:glycolytic process"/>
    <property type="evidence" value="ECO:0007669"/>
    <property type="project" value="UniProtKB-UniRule"/>
</dbReference>
<dbReference type="CDD" id="cd07067">
    <property type="entry name" value="HP_PGM_like"/>
    <property type="match status" value="1"/>
</dbReference>
<dbReference type="FunFam" id="3.40.50.1240:FF:000003">
    <property type="entry name" value="2,3-bisphosphoglycerate-dependent phosphoglycerate mutase"/>
    <property type="match status" value="1"/>
</dbReference>
<dbReference type="Gene3D" id="3.40.50.1240">
    <property type="entry name" value="Phosphoglycerate mutase-like"/>
    <property type="match status" value="1"/>
</dbReference>
<dbReference type="HAMAP" id="MF_01039">
    <property type="entry name" value="PGAM_GpmA"/>
    <property type="match status" value="1"/>
</dbReference>
<dbReference type="InterPro" id="IPR013078">
    <property type="entry name" value="His_Pase_superF_clade-1"/>
</dbReference>
<dbReference type="InterPro" id="IPR029033">
    <property type="entry name" value="His_PPase_superfam"/>
</dbReference>
<dbReference type="InterPro" id="IPR001345">
    <property type="entry name" value="PG/BPGM_mutase_AS"/>
</dbReference>
<dbReference type="InterPro" id="IPR005952">
    <property type="entry name" value="Phosphogly_mut1"/>
</dbReference>
<dbReference type="NCBIfam" id="TIGR01258">
    <property type="entry name" value="pgm_1"/>
    <property type="match status" value="1"/>
</dbReference>
<dbReference type="NCBIfam" id="NF010713">
    <property type="entry name" value="PRK14115.1"/>
    <property type="match status" value="1"/>
</dbReference>
<dbReference type="PANTHER" id="PTHR11931">
    <property type="entry name" value="PHOSPHOGLYCERATE MUTASE"/>
    <property type="match status" value="1"/>
</dbReference>
<dbReference type="Pfam" id="PF00300">
    <property type="entry name" value="His_Phos_1"/>
    <property type="match status" value="2"/>
</dbReference>
<dbReference type="PIRSF" id="PIRSF000709">
    <property type="entry name" value="6PFK_2-Ptase"/>
    <property type="match status" value="1"/>
</dbReference>
<dbReference type="SMART" id="SM00855">
    <property type="entry name" value="PGAM"/>
    <property type="match status" value="1"/>
</dbReference>
<dbReference type="SUPFAM" id="SSF53254">
    <property type="entry name" value="Phosphoglycerate mutase-like"/>
    <property type="match status" value="1"/>
</dbReference>
<dbReference type="PROSITE" id="PS00175">
    <property type="entry name" value="PG_MUTASE"/>
    <property type="match status" value="1"/>
</dbReference>
<sequence>MYTLVLLRHGESAWNKENRFTGWTDVDLSPQGIEEAHRAATLLHDGGYSFDLAYTSVLKRAIRTLWIVLDDLDLMYLPVHHTWRLNERHYGALQGLDKRETTEKFGKDQVQAWRRGYAVRPPALEETDPRHPRFDPRYAGLKKDDLPATESLEDTLARVVPYWNETIVPTLQDGKRILIAAHGNSIRALVKYLDGVPDDVITGLNIPTGFPLVYELDDDLHPIRHYYLGDEEEIRRATESVASQTATKK</sequence>
<gene>
    <name evidence="1" type="primary">gpmA</name>
    <name type="ordered locus">Mpal_0635</name>
</gene>
<reference key="1">
    <citation type="journal article" date="2015" name="Genome Announc.">
        <title>Complete Genome Sequence of Methanosphaerula palustris E1-9CT, a Hydrogenotrophic Methanogen Isolated from a Minerotrophic Fen Peatland.</title>
        <authorList>
            <person name="Cadillo-Quiroz H."/>
            <person name="Browne P."/>
            <person name="Kyrpides N."/>
            <person name="Woyke T."/>
            <person name="Goodwin L."/>
            <person name="Detter C."/>
            <person name="Yavitt J.B."/>
            <person name="Zinder S.H."/>
        </authorList>
    </citation>
    <scope>NUCLEOTIDE SEQUENCE [LARGE SCALE GENOMIC DNA]</scope>
    <source>
        <strain>ATCC BAA-1556 / DSM 19958 / E1-9c</strain>
    </source>
</reference>
<name>GPMA_METPE</name>
<protein>
    <recommendedName>
        <fullName evidence="1">2,3-bisphosphoglycerate-dependent phosphoglycerate mutase</fullName>
        <shortName evidence="1">BPG-dependent PGAM</shortName>
        <shortName evidence="1">PGAM</shortName>
        <shortName evidence="1">Phosphoglyceromutase</shortName>
        <shortName evidence="1">dPGM</shortName>
        <ecNumber evidence="1">5.4.2.11</ecNumber>
    </recommendedName>
</protein>
<proteinExistence type="inferred from homology"/>
<organism>
    <name type="scientific">Methanosphaerula palustris (strain ATCC BAA-1556 / DSM 19958 / E1-9c)</name>
    <dbReference type="NCBI Taxonomy" id="521011"/>
    <lineage>
        <taxon>Archaea</taxon>
        <taxon>Methanobacteriati</taxon>
        <taxon>Methanobacteriota</taxon>
        <taxon>Stenosarchaea group</taxon>
        <taxon>Methanomicrobia</taxon>
        <taxon>Methanomicrobiales</taxon>
        <taxon>Methanoregulaceae</taxon>
        <taxon>Methanosphaerula</taxon>
    </lineage>
</organism>
<feature type="chain" id="PRO_1000149519" description="2,3-bisphosphoglycerate-dependent phosphoglycerate mutase">
    <location>
        <begin position="1"/>
        <end position="249"/>
    </location>
</feature>
<feature type="active site" description="Tele-phosphohistidine intermediate" evidence="1">
    <location>
        <position position="9"/>
    </location>
</feature>
<feature type="active site" description="Proton donor/acceptor" evidence="1">
    <location>
        <position position="87"/>
    </location>
</feature>
<feature type="binding site" evidence="1">
    <location>
        <begin position="8"/>
        <end position="15"/>
    </location>
    <ligand>
        <name>substrate</name>
    </ligand>
</feature>
<feature type="binding site" evidence="1">
    <location>
        <begin position="21"/>
        <end position="22"/>
    </location>
    <ligand>
        <name>substrate</name>
    </ligand>
</feature>
<feature type="binding site" evidence="1">
    <location>
        <position position="60"/>
    </location>
    <ligand>
        <name>substrate</name>
    </ligand>
</feature>
<feature type="binding site" evidence="1">
    <location>
        <begin position="87"/>
        <end position="90"/>
    </location>
    <ligand>
        <name>substrate</name>
    </ligand>
</feature>
<feature type="binding site" evidence="1">
    <location>
        <position position="98"/>
    </location>
    <ligand>
        <name>substrate</name>
    </ligand>
</feature>
<feature type="binding site" evidence="1">
    <location>
        <begin position="114"/>
        <end position="115"/>
    </location>
    <ligand>
        <name>substrate</name>
    </ligand>
</feature>
<feature type="binding site" evidence="1">
    <location>
        <begin position="183"/>
        <end position="184"/>
    </location>
    <ligand>
        <name>substrate</name>
    </ligand>
</feature>
<feature type="site" description="Transition state stabilizer" evidence="1">
    <location>
        <position position="182"/>
    </location>
</feature>
<accession>B8GFF8</accession>